<evidence type="ECO:0000255" key="1">
    <source>
        <dbReference type="HAMAP-Rule" id="MF_00230"/>
    </source>
</evidence>
<sequence length="359" mass="36987">MQILADLLNTIPAIDSTAMSRAQRHIDGLLKPVGSLGKLEVLAIQLAGMPGLNGIPHVGKKAVLVMCADHGVWEEGVAISPKEVTAIQAENMTRGTTGVCVLAEQAGANVHVIDVGIDTAEPIPGLINMRVARGSGNIASAPAMSRRQAEKLLLDVICYTQELAKNGVTLFGVGELGMANTTPAAAIVSTITGRDPEEVVGIGANLPTDKLANKIDVVRRAITLNQPNPQDGVDVLAKVGGFDLVGIAGVMLGAASCGLPVLLDGFLSYAAALAACQMSPAIKPYLIPSHLSAEKGARIALSHLGLEPYLNMEMRLGEGSGAALAMPIIEAACAIYNNMGELAASNIVLPGNTTSDLNS</sequence>
<accession>B7MWP8</accession>
<organism>
    <name type="scientific">Escherichia coli O81 (strain ED1a)</name>
    <dbReference type="NCBI Taxonomy" id="585397"/>
    <lineage>
        <taxon>Bacteria</taxon>
        <taxon>Pseudomonadati</taxon>
        <taxon>Pseudomonadota</taxon>
        <taxon>Gammaproteobacteria</taxon>
        <taxon>Enterobacterales</taxon>
        <taxon>Enterobacteriaceae</taxon>
        <taxon>Escherichia</taxon>
    </lineage>
</organism>
<protein>
    <recommendedName>
        <fullName evidence="1">Nicotinate-nucleotide--dimethylbenzimidazole phosphoribosyltransferase</fullName>
        <shortName evidence="1">NN:DBI PRT</shortName>
        <ecNumber evidence="1">2.4.2.21</ecNumber>
    </recommendedName>
    <alternativeName>
        <fullName evidence="1">N(1)-alpha-phosphoribosyltransferase</fullName>
    </alternativeName>
</protein>
<dbReference type="EC" id="2.4.2.21" evidence="1"/>
<dbReference type="EMBL" id="CU928162">
    <property type="protein sequence ID" value="CAR08514.2"/>
    <property type="molecule type" value="Genomic_DNA"/>
</dbReference>
<dbReference type="RefSeq" id="WP_001166160.1">
    <property type="nucleotide sequence ID" value="NC_011745.1"/>
</dbReference>
<dbReference type="SMR" id="B7MWP8"/>
<dbReference type="KEGG" id="ecq:ECED1_2327"/>
<dbReference type="HOGENOM" id="CLU_002982_0_0_6"/>
<dbReference type="UniPathway" id="UPA00061">
    <property type="reaction ID" value="UER00516"/>
</dbReference>
<dbReference type="Proteomes" id="UP000000748">
    <property type="component" value="Chromosome"/>
</dbReference>
<dbReference type="GO" id="GO:0008939">
    <property type="term" value="F:nicotinate-nucleotide-dimethylbenzimidazole phosphoribosyltransferase activity"/>
    <property type="evidence" value="ECO:0007669"/>
    <property type="project" value="UniProtKB-UniRule"/>
</dbReference>
<dbReference type="GO" id="GO:0009236">
    <property type="term" value="P:cobalamin biosynthetic process"/>
    <property type="evidence" value="ECO:0007669"/>
    <property type="project" value="UniProtKB-KW"/>
</dbReference>
<dbReference type="CDD" id="cd02439">
    <property type="entry name" value="DMB-PRT_CobT"/>
    <property type="match status" value="1"/>
</dbReference>
<dbReference type="FunFam" id="1.10.1610.10:FF:000001">
    <property type="entry name" value="Nicotinate-nucleotide--dimethylbenzimidazole phosphoribosyltransferase"/>
    <property type="match status" value="1"/>
</dbReference>
<dbReference type="FunFam" id="3.40.50.10210:FF:000001">
    <property type="entry name" value="Nicotinate-nucleotide--dimethylbenzimidazole phosphoribosyltransferase"/>
    <property type="match status" value="1"/>
</dbReference>
<dbReference type="Gene3D" id="1.10.1610.10">
    <property type="match status" value="1"/>
</dbReference>
<dbReference type="Gene3D" id="3.40.50.10210">
    <property type="match status" value="1"/>
</dbReference>
<dbReference type="HAMAP" id="MF_00230">
    <property type="entry name" value="CobT"/>
    <property type="match status" value="1"/>
</dbReference>
<dbReference type="InterPro" id="IPR003200">
    <property type="entry name" value="Nict_dMeBzImd_PRibTrfase"/>
</dbReference>
<dbReference type="InterPro" id="IPR017846">
    <property type="entry name" value="Nict_dMeBzImd_PRibTrfase_bact"/>
</dbReference>
<dbReference type="InterPro" id="IPR023195">
    <property type="entry name" value="Nict_dMeBzImd_PRibTrfase_N"/>
</dbReference>
<dbReference type="InterPro" id="IPR036087">
    <property type="entry name" value="Nict_dMeBzImd_PRibTrfase_sf"/>
</dbReference>
<dbReference type="NCBIfam" id="TIGR03160">
    <property type="entry name" value="cobT_DBIPRT"/>
    <property type="match status" value="1"/>
</dbReference>
<dbReference type="NCBIfam" id="NF000996">
    <property type="entry name" value="PRK00105.1"/>
    <property type="match status" value="1"/>
</dbReference>
<dbReference type="PANTHER" id="PTHR43463">
    <property type="entry name" value="NICOTINATE-NUCLEOTIDE--DIMETHYLBENZIMIDAZOLE PHOSPHORIBOSYLTRANSFERASE"/>
    <property type="match status" value="1"/>
</dbReference>
<dbReference type="PANTHER" id="PTHR43463:SF1">
    <property type="entry name" value="NICOTINATE-NUCLEOTIDE--DIMETHYLBENZIMIDAZOLE PHOSPHORIBOSYLTRANSFERASE"/>
    <property type="match status" value="1"/>
</dbReference>
<dbReference type="Pfam" id="PF02277">
    <property type="entry name" value="DBI_PRT"/>
    <property type="match status" value="1"/>
</dbReference>
<dbReference type="SUPFAM" id="SSF52733">
    <property type="entry name" value="Nicotinate mononucleotide:5,6-dimethylbenzimidazole phosphoribosyltransferase (CobT)"/>
    <property type="match status" value="1"/>
</dbReference>
<name>COBT_ECO81</name>
<gene>
    <name evidence="1" type="primary">cobT</name>
    <name type="ordered locus">ECED1_2327</name>
</gene>
<feature type="chain" id="PRO_1000125106" description="Nicotinate-nucleotide--dimethylbenzimidazole phosphoribosyltransferase">
    <location>
        <begin position="1"/>
        <end position="359"/>
    </location>
</feature>
<feature type="active site" description="Proton acceptor" evidence="1">
    <location>
        <position position="318"/>
    </location>
</feature>
<reference key="1">
    <citation type="journal article" date="2009" name="PLoS Genet.">
        <title>Organised genome dynamics in the Escherichia coli species results in highly diverse adaptive paths.</title>
        <authorList>
            <person name="Touchon M."/>
            <person name="Hoede C."/>
            <person name="Tenaillon O."/>
            <person name="Barbe V."/>
            <person name="Baeriswyl S."/>
            <person name="Bidet P."/>
            <person name="Bingen E."/>
            <person name="Bonacorsi S."/>
            <person name="Bouchier C."/>
            <person name="Bouvet O."/>
            <person name="Calteau A."/>
            <person name="Chiapello H."/>
            <person name="Clermont O."/>
            <person name="Cruveiller S."/>
            <person name="Danchin A."/>
            <person name="Diard M."/>
            <person name="Dossat C."/>
            <person name="Karoui M.E."/>
            <person name="Frapy E."/>
            <person name="Garry L."/>
            <person name="Ghigo J.M."/>
            <person name="Gilles A.M."/>
            <person name="Johnson J."/>
            <person name="Le Bouguenec C."/>
            <person name="Lescat M."/>
            <person name="Mangenot S."/>
            <person name="Martinez-Jehanne V."/>
            <person name="Matic I."/>
            <person name="Nassif X."/>
            <person name="Oztas S."/>
            <person name="Petit M.A."/>
            <person name="Pichon C."/>
            <person name="Rouy Z."/>
            <person name="Ruf C.S."/>
            <person name="Schneider D."/>
            <person name="Tourret J."/>
            <person name="Vacherie B."/>
            <person name="Vallenet D."/>
            <person name="Medigue C."/>
            <person name="Rocha E.P.C."/>
            <person name="Denamur E."/>
        </authorList>
    </citation>
    <scope>NUCLEOTIDE SEQUENCE [LARGE SCALE GENOMIC DNA]</scope>
    <source>
        <strain>ED1a</strain>
    </source>
</reference>
<proteinExistence type="inferred from homology"/>
<comment type="function">
    <text evidence="1">Catalyzes the synthesis of alpha-ribazole-5'-phosphate from nicotinate mononucleotide (NAMN) and 5,6-dimethylbenzimidazole (DMB).</text>
</comment>
<comment type="catalytic activity">
    <reaction evidence="1">
        <text>5,6-dimethylbenzimidazole + nicotinate beta-D-ribonucleotide = alpha-ribazole 5'-phosphate + nicotinate + H(+)</text>
        <dbReference type="Rhea" id="RHEA:11196"/>
        <dbReference type="ChEBI" id="CHEBI:15378"/>
        <dbReference type="ChEBI" id="CHEBI:15890"/>
        <dbReference type="ChEBI" id="CHEBI:32544"/>
        <dbReference type="ChEBI" id="CHEBI:57502"/>
        <dbReference type="ChEBI" id="CHEBI:57918"/>
        <dbReference type="EC" id="2.4.2.21"/>
    </reaction>
</comment>
<comment type="pathway">
    <text evidence="1">Nucleoside biosynthesis; alpha-ribazole biosynthesis; alpha-ribazole from 5,6-dimethylbenzimidazole: step 1/2.</text>
</comment>
<comment type="subunit">
    <text evidence="1">Homodimer.</text>
</comment>
<comment type="similarity">
    <text evidence="1">Belongs to the CobT family.</text>
</comment>
<keyword id="KW-0169">Cobalamin biosynthesis</keyword>
<keyword id="KW-0328">Glycosyltransferase</keyword>
<keyword id="KW-0808">Transferase</keyword>